<proteinExistence type="evidence at protein level"/>
<protein>
    <recommendedName>
        <fullName evidence="5">Ubiquitin-ribosomal protein eS31 fusion protein</fullName>
    </recommendedName>
    <component>
        <recommendedName>
            <fullName evidence="5">Ubiquitin</fullName>
        </recommendedName>
    </component>
    <component>
        <recommendedName>
            <fullName evidence="5">Small ribosomal subunit protein eS31</fullName>
        </recommendedName>
        <alternativeName>
            <fullName>40S ribosomal protein S31</fullName>
        </alternativeName>
    </component>
</protein>
<organism>
    <name type="scientific">Candida albicans (strain SC5314 / ATCC MYA-2876)</name>
    <name type="common">Yeast</name>
    <dbReference type="NCBI Taxonomy" id="237561"/>
    <lineage>
        <taxon>Eukaryota</taxon>
        <taxon>Fungi</taxon>
        <taxon>Dikarya</taxon>
        <taxon>Ascomycota</taxon>
        <taxon>Saccharomycotina</taxon>
        <taxon>Pichiomycetes</taxon>
        <taxon>Debaryomycetaceae</taxon>
        <taxon>Candida/Lodderomyces clade</taxon>
        <taxon>Candida</taxon>
    </lineage>
</organism>
<keyword id="KW-0002">3D-structure</keyword>
<keyword id="KW-0963">Cytoplasm</keyword>
<keyword id="KW-1017">Isopeptide bond</keyword>
<keyword id="KW-1185">Reference proteome</keyword>
<keyword id="KW-0687">Ribonucleoprotein</keyword>
<keyword id="KW-0689">Ribosomal protein</keyword>
<keyword id="KW-0862">Zinc</keyword>
<sequence>MQIFVKTLTGKTITLEVESSDTIDNVKSKIQDKEGIPPDQQRLIFAGKQLEDGRTLSDYNIQKESTLHLVLRLRGGGKKRKKKVYTTPKKIKHKHRKHKLAVLTYYKVDNEGNVERLRRECPAPTCGAGIFMANMKDRQYCGKCHLTLKAN</sequence>
<gene>
    <name type="primary">UBI3</name>
    <name type="ordered locus">orf19.3087</name>
    <name type="ORF">CAALFM_C407180WA</name>
</gene>
<name>RS31_CANAL</name>
<reference key="1">
    <citation type="journal article" date="2004" name="Proc. Natl. Acad. Sci. U.S.A.">
        <title>The diploid genome sequence of Candida albicans.</title>
        <authorList>
            <person name="Jones T."/>
            <person name="Federspiel N.A."/>
            <person name="Chibana H."/>
            <person name="Dungan J."/>
            <person name="Kalman S."/>
            <person name="Magee B.B."/>
            <person name="Newport G."/>
            <person name="Thorstenson Y.R."/>
            <person name="Agabian N."/>
            <person name="Magee P.T."/>
            <person name="Davis R.W."/>
            <person name="Scherer S."/>
        </authorList>
    </citation>
    <scope>NUCLEOTIDE SEQUENCE [LARGE SCALE GENOMIC DNA]</scope>
    <source>
        <strain>SC5314 / ATCC MYA-2876</strain>
    </source>
</reference>
<reference key="2">
    <citation type="journal article" date="2007" name="Genome Biol.">
        <title>Assembly of the Candida albicans genome into sixteen supercontigs aligned on the eight chromosomes.</title>
        <authorList>
            <person name="van het Hoog M."/>
            <person name="Rast T.J."/>
            <person name="Martchenko M."/>
            <person name="Grindle S."/>
            <person name="Dignard D."/>
            <person name="Hogues H."/>
            <person name="Cuomo C."/>
            <person name="Berriman M."/>
            <person name="Scherer S."/>
            <person name="Magee B.B."/>
            <person name="Whiteway M."/>
            <person name="Chibana H."/>
            <person name="Nantel A."/>
            <person name="Magee P.T."/>
        </authorList>
    </citation>
    <scope>GENOME REANNOTATION</scope>
    <source>
        <strain>SC5314 / ATCC MYA-2876</strain>
    </source>
</reference>
<reference key="3">
    <citation type="journal article" date="2013" name="Genome Biol.">
        <title>Assembly of a phased diploid Candida albicans genome facilitates allele-specific measurements and provides a simple model for repeat and indel structure.</title>
        <authorList>
            <person name="Muzzey D."/>
            <person name="Schwartz K."/>
            <person name="Weissman J.S."/>
            <person name="Sherlock G."/>
        </authorList>
    </citation>
    <scope>NUCLEOTIDE SEQUENCE [LARGE SCALE GENOMIC DNA]</scope>
    <scope>GENOME REANNOTATION</scope>
    <source>
        <strain>SC5314 / ATCC MYA-2876</strain>
    </source>
</reference>
<reference key="4">
    <citation type="journal article" date="2000" name="Yeast">
        <title>Molecular cloning and characterization of the Candida albicans UBI3 gene coding for a ubiquitin-hybrid protein.</title>
        <authorList>
            <person name="Roig P."/>
            <person name="Martinez J.P."/>
            <person name="Gil M.L."/>
            <person name="Gozalbo D."/>
        </authorList>
    </citation>
    <scope>IDENTIFICATION OF INITIATION METHIONINE</scope>
</reference>
<reference evidence="9 10 11" key="5">
    <citation type="journal article" date="2022" name="Sci. Adv.">
        <title>E-site drug specificity of the human pathogen Candida albicans ribosome.</title>
        <authorList>
            <person name="Zgadzay Y."/>
            <person name="Kolosova O."/>
            <person name="Stetsenko A."/>
            <person name="Wu C."/>
            <person name="Bruchlen D."/>
            <person name="Usachev K."/>
            <person name="Validov S."/>
            <person name="Jenner L."/>
            <person name="Rogachev A."/>
            <person name="Yusupova G."/>
            <person name="Sachs M.S."/>
            <person name="Guskov A."/>
            <person name="Yusupov M."/>
        </authorList>
    </citation>
    <scope>STRUCTURE BY ELECTRON MICROSCOPY (2.32 ANGSTROMS) OF THE 80S RIBOSOME</scope>
    <scope>SUBUNIT</scope>
    <scope>COFACTOR</scope>
</reference>
<dbReference type="EMBL" id="CP017626">
    <property type="protein sequence ID" value="AOW29439.1"/>
    <property type="status" value="ALT_INIT"/>
    <property type="molecule type" value="Genomic_DNA"/>
</dbReference>
<dbReference type="RefSeq" id="XP_715397.1">
    <property type="nucleotide sequence ID" value="XM_710304.1"/>
</dbReference>
<dbReference type="PDB" id="7PZY">
    <property type="method" value="EM"/>
    <property type="resolution" value="2.32 A"/>
    <property type="chains" value="g=1-151"/>
</dbReference>
<dbReference type="PDB" id="7Q08">
    <property type="method" value="EM"/>
    <property type="resolution" value="2.56 A"/>
    <property type="chains" value="g=1-151"/>
</dbReference>
<dbReference type="PDB" id="7Q0F">
    <property type="method" value="EM"/>
    <property type="resolution" value="2.64 A"/>
    <property type="chains" value="g=1-151"/>
</dbReference>
<dbReference type="PDB" id="7Q0P">
    <property type="method" value="EM"/>
    <property type="resolution" value="2.77 A"/>
    <property type="chains" value="g=1-151"/>
</dbReference>
<dbReference type="PDB" id="7Q0R">
    <property type="method" value="EM"/>
    <property type="resolution" value="2.67 A"/>
    <property type="chains" value="g=1-151"/>
</dbReference>
<dbReference type="PDB" id="8C3A">
    <property type="method" value="X-ray"/>
    <property type="resolution" value="3.00 A"/>
    <property type="chains" value="DS/h=1-151"/>
</dbReference>
<dbReference type="PDB" id="8CQ7">
    <property type="method" value="X-ray"/>
    <property type="resolution" value="3.20 A"/>
    <property type="chains" value="DS/h=1-151"/>
</dbReference>
<dbReference type="PDB" id="8CQW">
    <property type="method" value="X-ray"/>
    <property type="resolution" value="3.05 A"/>
    <property type="chains" value="DS/h=1-151"/>
</dbReference>
<dbReference type="PDB" id="8CRE">
    <property type="method" value="X-ray"/>
    <property type="resolution" value="3.00 A"/>
    <property type="chains" value="DS/h=1-151"/>
</dbReference>
<dbReference type="PDB" id="8OEQ">
    <property type="method" value="X-ray"/>
    <property type="resolution" value="3.30 A"/>
    <property type="chains" value="DS/h=1-151"/>
</dbReference>
<dbReference type="PDB" id="8OGJ">
    <property type="method" value="EM"/>
    <property type="resolution" value="3.10 A"/>
    <property type="chains" value="g=1-151"/>
</dbReference>
<dbReference type="PDB" id="8OH6">
    <property type="method" value="X-ray"/>
    <property type="resolution" value="3.35 A"/>
    <property type="chains" value="DS/h=1-151"/>
</dbReference>
<dbReference type="PDB" id="8OI5">
    <property type="method" value="X-ray"/>
    <property type="resolution" value="2.90 A"/>
    <property type="chains" value="h=1-151"/>
</dbReference>
<dbReference type="PDB" id="8OJ3">
    <property type="method" value="X-ray"/>
    <property type="resolution" value="3.50 A"/>
    <property type="chains" value="DS/h=1-151"/>
</dbReference>
<dbReference type="PDBsum" id="7PZY"/>
<dbReference type="PDBsum" id="7Q08"/>
<dbReference type="PDBsum" id="7Q0F"/>
<dbReference type="PDBsum" id="7Q0P"/>
<dbReference type="PDBsum" id="7Q0R"/>
<dbReference type="PDBsum" id="8C3A"/>
<dbReference type="PDBsum" id="8CQ7"/>
<dbReference type="PDBsum" id="8CQW"/>
<dbReference type="PDBsum" id="8CRE"/>
<dbReference type="PDBsum" id="8OEQ"/>
<dbReference type="PDBsum" id="8OGJ"/>
<dbReference type="PDBsum" id="8OH6"/>
<dbReference type="PDBsum" id="8OI5"/>
<dbReference type="PDBsum" id="8OJ3"/>
<dbReference type="EMDB" id="EMD-13737"/>
<dbReference type="EMDB" id="EMD-13741"/>
<dbReference type="EMDB" id="EMD-13744"/>
<dbReference type="EMDB" id="EMD-13749"/>
<dbReference type="EMDB" id="EMD-13750"/>
<dbReference type="EMDB" id="EMD-16874"/>
<dbReference type="SMR" id="Q5A109"/>
<dbReference type="FunCoup" id="Q5A109">
    <property type="interactions" value="1175"/>
</dbReference>
<dbReference type="STRING" id="237561.Q5A109"/>
<dbReference type="EnsemblFungi" id="C4_07180W_A-T">
    <property type="protein sequence ID" value="C4_07180W_A-T-p1"/>
    <property type="gene ID" value="C4_07180W_A"/>
</dbReference>
<dbReference type="GeneID" id="3642934"/>
<dbReference type="KEGG" id="cal:CAALFM_C407180WA"/>
<dbReference type="CGD" id="CAL0000178202">
    <property type="gene designation" value="UBI3"/>
</dbReference>
<dbReference type="VEuPathDB" id="FungiDB:C4_07180W_A"/>
<dbReference type="eggNOG" id="KOG0004">
    <property type="taxonomic scope" value="Eukaryota"/>
</dbReference>
<dbReference type="HOGENOM" id="CLU_010412_2_1_1"/>
<dbReference type="InParanoid" id="Q5A109"/>
<dbReference type="OrthoDB" id="428577at2759"/>
<dbReference type="Proteomes" id="UP000000559">
    <property type="component" value="Chromosome 4"/>
</dbReference>
<dbReference type="GO" id="GO:0005737">
    <property type="term" value="C:cytoplasm"/>
    <property type="evidence" value="ECO:0000318"/>
    <property type="project" value="GO_Central"/>
</dbReference>
<dbReference type="GO" id="GO:0005576">
    <property type="term" value="C:extracellular region"/>
    <property type="evidence" value="ECO:0000314"/>
    <property type="project" value="CGD"/>
</dbReference>
<dbReference type="GO" id="GO:0005634">
    <property type="term" value="C:nucleus"/>
    <property type="evidence" value="ECO:0000318"/>
    <property type="project" value="GO_Central"/>
</dbReference>
<dbReference type="GO" id="GO:1990904">
    <property type="term" value="C:ribonucleoprotein complex"/>
    <property type="evidence" value="ECO:0007669"/>
    <property type="project" value="UniProtKB-KW"/>
</dbReference>
<dbReference type="GO" id="GO:0005840">
    <property type="term" value="C:ribosome"/>
    <property type="evidence" value="ECO:0007669"/>
    <property type="project" value="UniProtKB-KW"/>
</dbReference>
<dbReference type="GO" id="GO:0031386">
    <property type="term" value="F:protein tag activity"/>
    <property type="evidence" value="ECO:0000316"/>
    <property type="project" value="CGD"/>
</dbReference>
<dbReference type="GO" id="GO:0003735">
    <property type="term" value="F:structural constituent of ribosome"/>
    <property type="evidence" value="ECO:0000316"/>
    <property type="project" value="CGD"/>
</dbReference>
<dbReference type="GO" id="GO:0031625">
    <property type="term" value="F:ubiquitin protein ligase binding"/>
    <property type="evidence" value="ECO:0000318"/>
    <property type="project" value="GO_Central"/>
</dbReference>
<dbReference type="GO" id="GO:0019941">
    <property type="term" value="P:modification-dependent protein catabolic process"/>
    <property type="evidence" value="ECO:0000318"/>
    <property type="project" value="GO_Central"/>
</dbReference>
<dbReference type="GO" id="GO:0016567">
    <property type="term" value="P:protein ubiquitination"/>
    <property type="evidence" value="ECO:0000316"/>
    <property type="project" value="CGD"/>
</dbReference>
<dbReference type="GO" id="GO:0042254">
    <property type="term" value="P:ribosome biogenesis"/>
    <property type="evidence" value="ECO:0000316"/>
    <property type="project" value="CGD"/>
</dbReference>
<dbReference type="GO" id="GO:0006412">
    <property type="term" value="P:translation"/>
    <property type="evidence" value="ECO:0007669"/>
    <property type="project" value="InterPro"/>
</dbReference>
<dbReference type="CDD" id="cd01803">
    <property type="entry name" value="Ubl_ubiquitin"/>
    <property type="match status" value="1"/>
</dbReference>
<dbReference type="FunFam" id="3.10.20.90:FF:000008">
    <property type="entry name" value="Ubiquitin-40S ribosomal protein S27a"/>
    <property type="match status" value="1"/>
</dbReference>
<dbReference type="Gene3D" id="6.20.50.150">
    <property type="match status" value="1"/>
</dbReference>
<dbReference type="Gene3D" id="3.10.20.90">
    <property type="entry name" value="Phosphatidylinositol 3-kinase Catalytic Subunit, Chain A, domain 1"/>
    <property type="match status" value="1"/>
</dbReference>
<dbReference type="InterPro" id="IPR002906">
    <property type="entry name" value="Ribosomal_eS31"/>
</dbReference>
<dbReference type="InterPro" id="IPR038582">
    <property type="entry name" value="Ribosomal_eS31_euk-type_sf"/>
</dbReference>
<dbReference type="InterPro" id="IPR011332">
    <property type="entry name" value="Ribosomal_zn-bd"/>
</dbReference>
<dbReference type="InterPro" id="IPR000626">
    <property type="entry name" value="Ubiquitin-like_dom"/>
</dbReference>
<dbReference type="InterPro" id="IPR029071">
    <property type="entry name" value="Ubiquitin-like_domsf"/>
</dbReference>
<dbReference type="InterPro" id="IPR019954">
    <property type="entry name" value="Ubiquitin_CS"/>
</dbReference>
<dbReference type="InterPro" id="IPR019956">
    <property type="entry name" value="Ubiquitin_dom"/>
</dbReference>
<dbReference type="InterPro" id="IPR050158">
    <property type="entry name" value="Ubiquitin_ubiquitin-like"/>
</dbReference>
<dbReference type="PANTHER" id="PTHR10666">
    <property type="entry name" value="UBIQUITIN"/>
    <property type="match status" value="1"/>
</dbReference>
<dbReference type="Pfam" id="PF01599">
    <property type="entry name" value="Ribosomal_S27"/>
    <property type="match status" value="1"/>
</dbReference>
<dbReference type="Pfam" id="PF00240">
    <property type="entry name" value="ubiquitin"/>
    <property type="match status" value="1"/>
</dbReference>
<dbReference type="PRINTS" id="PR00348">
    <property type="entry name" value="UBIQUITIN"/>
</dbReference>
<dbReference type="SMART" id="SM01402">
    <property type="entry name" value="Ribosomal_S27"/>
    <property type="match status" value="1"/>
</dbReference>
<dbReference type="SMART" id="SM00213">
    <property type="entry name" value="UBQ"/>
    <property type="match status" value="1"/>
</dbReference>
<dbReference type="SUPFAM" id="SSF54236">
    <property type="entry name" value="Ubiquitin-like"/>
    <property type="match status" value="1"/>
</dbReference>
<dbReference type="SUPFAM" id="SSF57829">
    <property type="entry name" value="Zn-binding ribosomal proteins"/>
    <property type="match status" value="1"/>
</dbReference>
<dbReference type="PROSITE" id="PS00299">
    <property type="entry name" value="UBIQUITIN_1"/>
    <property type="match status" value="1"/>
</dbReference>
<dbReference type="PROSITE" id="PS50053">
    <property type="entry name" value="UBIQUITIN_2"/>
    <property type="match status" value="1"/>
</dbReference>
<comment type="function">
    <molecule>Ubiquitin</molecule>
    <text evidence="2">Exists either covalently attached to another protein, or free (unanchored). When covalently bound, it is conjugated to target proteins via an isopeptide bond either as a monomer (monoubiquitin), a polymer linked via different Lys residues of the ubiquitin (polyubiquitin chains) or a linear polymer linked via the initiator Met of the ubiquitin (linear polyubiquitin chains). Polyubiquitin chains, when attached to a target protein, have different functions depending on the Lys residue of the ubiquitin that is linked: Lys-6-linked may be involved in DNA repair; Lys-11-linked is involved in ERAD (endoplasmic reticulum-associated degradation) and in cell-cycle regulation; Lys-29-linked is involved in lysosomal degradation; Lys-33-linked is involved in kinase modification; Lys-48-linked is involved in protein degradation via the proteasome; Lys-63-linked is involved in endocytosis, and DNA-damage responses. Linear polymer chains formed via attachment by the initiator Met lead to cell signaling. Ubiquitin is usually conjugated to Lys residues of target proteins, however, in rare cases, conjugation to Cys or Ser residues has been observed. When polyubiquitin is free (unanchored-polyubiquitin), it also has distinct roles, such as in activation of protein kinases, and in signaling.</text>
</comment>
<comment type="function">
    <molecule>Small ribosomal subunit protein eS31</molecule>
    <text evidence="8">Component of the ribosome, a large ribonucleoprotein complex responsible for the synthesis of proteins in the cell. The small ribosomal subunit (SSU) binds messenger RNAs (mRNAs) and translates the encoded message by selecting cognate aminoacyl-transfer RNA (tRNA) molecules. The large subunit (LSU) contains the ribosomal catalytic site termed the peptidyl transferase center (PTC), which catalyzes the formation of peptide bonds, thereby polymerizing the amino acids delivered by tRNAs into a polypeptide chain. The nascent polypeptides leave the ribosome through a tunnel in the LSU and interact with protein factors that function in enzymatic processing, targeting, and the membrane insertion of nascent chains at the exit of the ribosomal tunnel.</text>
</comment>
<comment type="cofactor">
    <cofactor evidence="4">
        <name>Zn(2+)</name>
        <dbReference type="ChEBI" id="CHEBI:29105"/>
    </cofactor>
</comment>
<comment type="subunit">
    <molecule>Small ribosomal subunit protein eS31</molecule>
    <text evidence="4">Component of the small ribosomal subunit (PubMed:35613268). Mature ribosomes consist of a small (40S) and a large (60S) subunit (PubMed:35613268). The 40S subunit contains about 32 different proteins and 1 molecule of RNA (18S) (PubMed:35613268). The 60S subunit contains 45 different proteins and 3 molecules of RNA (25S, 5.8S and 5S) (PubMed:35613268).</text>
</comment>
<comment type="subcellular location">
    <subcellularLocation>
        <location evidence="8">Cytoplasm</location>
    </subcellularLocation>
</comment>
<comment type="miscellaneous">
    <text evidence="6">Ubiquitin is encoded by several different genes. UBI3 is a polyprotein with one copy of ubiquitin fused to ribosomal protein eS31. UBI4 is a polyprotein containing 3 exact head to tail repeats of ubiquitin.</text>
</comment>
<comment type="similarity">
    <text evidence="6">In the C-terminal section; belongs to the eukaryotic ribosomal protein eS31 family.</text>
</comment>
<comment type="similarity">
    <text evidence="6">In the N-terminal section; belongs to the ubiquitin family.</text>
</comment>
<comment type="sequence caution" evidence="7">
    <conflict type="erroneous initiation">
        <sequence resource="EMBL-CDS" id="AOW29439"/>
    </conflict>
    <text>Truncated N-terminus.</text>
</comment>
<feature type="chain" id="PRO_0000456568" description="Ubiquitin" evidence="1">
    <location>
        <begin position="1"/>
        <end position="76"/>
    </location>
</feature>
<feature type="chain" id="PRO_0000456569" description="Small ribosomal subunit protein eS31" evidence="1">
    <location>
        <begin position="77"/>
        <end position="151"/>
    </location>
</feature>
<feature type="domain" description="Ubiquitin-like" evidence="3">
    <location>
        <begin position="1"/>
        <end position="76"/>
    </location>
</feature>
<feature type="binding site" evidence="4 9">
    <location>
        <position position="121"/>
    </location>
    <ligand>
        <name>Zn(2+)</name>
        <dbReference type="ChEBI" id="CHEBI:29105"/>
        <label>201</label>
    </ligand>
</feature>
<feature type="binding site" evidence="4 9">
    <location>
        <position position="126"/>
    </location>
    <ligand>
        <name>Zn(2+)</name>
        <dbReference type="ChEBI" id="CHEBI:29105"/>
        <label>201</label>
    </ligand>
</feature>
<feature type="binding site" evidence="4 9">
    <location>
        <position position="141"/>
    </location>
    <ligand>
        <name>Zn(2+)</name>
        <dbReference type="ChEBI" id="CHEBI:29105"/>
        <label>201</label>
    </ligand>
</feature>
<feature type="binding site" evidence="4 9">
    <location>
        <position position="144"/>
    </location>
    <ligand>
        <name>Zn(2+)</name>
        <dbReference type="ChEBI" id="CHEBI:29105"/>
        <label>201</label>
    </ligand>
</feature>
<feature type="cross-link" description="Glycyl lysine isopeptide (Gly-Lys) (interchain with K-? in acceptor proteins)" evidence="3">
    <location>
        <position position="76"/>
    </location>
</feature>
<accession>Q5A109</accession>
<evidence type="ECO:0000250" key="1">
    <source>
        <dbReference type="UniProtKB" id="P05759"/>
    </source>
</evidence>
<evidence type="ECO:0000250" key="2">
    <source>
        <dbReference type="UniProtKB" id="P62979"/>
    </source>
</evidence>
<evidence type="ECO:0000255" key="3">
    <source>
        <dbReference type="PROSITE-ProRule" id="PRU00214"/>
    </source>
</evidence>
<evidence type="ECO:0000269" key="4">
    <source>
    </source>
</evidence>
<evidence type="ECO:0000303" key="5">
    <source>
    </source>
</evidence>
<evidence type="ECO:0000305" key="6"/>
<evidence type="ECO:0000305" key="7">
    <source>
    </source>
</evidence>
<evidence type="ECO:0000305" key="8">
    <source>
    </source>
</evidence>
<evidence type="ECO:0007744" key="9">
    <source>
        <dbReference type="PDB" id="7PZY"/>
    </source>
</evidence>
<evidence type="ECO:0007744" key="10">
    <source>
        <dbReference type="PDB" id="7Q0F"/>
    </source>
</evidence>
<evidence type="ECO:0007744" key="11">
    <source>
        <dbReference type="PDB" id="7Q0P"/>
    </source>
</evidence>